<organism>
    <name type="scientific">Caenorhabditis elegans</name>
    <dbReference type="NCBI Taxonomy" id="6239"/>
    <lineage>
        <taxon>Eukaryota</taxon>
        <taxon>Metazoa</taxon>
        <taxon>Ecdysozoa</taxon>
        <taxon>Nematoda</taxon>
        <taxon>Chromadorea</taxon>
        <taxon>Rhabditida</taxon>
        <taxon>Rhabditina</taxon>
        <taxon>Rhabditomorpha</taxon>
        <taxon>Rhabditoidea</taxon>
        <taxon>Rhabditidae</taxon>
        <taxon>Peloderinae</taxon>
        <taxon>Caenorhabditis</taxon>
    </lineage>
</organism>
<proteinExistence type="evidence at transcript level"/>
<reference key="1">
    <citation type="journal article" date="1999" name="Genome Res.">
        <title>The nuclear receptor superfamily has undergone extensive proliferation and diversification in nematodes.</title>
        <authorList>
            <person name="Sluder A.E."/>
            <person name="Mathews S.W."/>
            <person name="Hough D."/>
            <person name="Yin V.P."/>
            <person name="Maina C.V."/>
        </authorList>
    </citation>
    <scope>NUCLEOTIDE SEQUENCE [MRNA] (ISOFORM A)</scope>
    <source>
        <strain>Bristol N2</strain>
    </source>
</reference>
<reference key="2">
    <citation type="journal article" date="1998" name="Science">
        <title>Genome sequence of the nematode C. elegans: a platform for investigating biology.</title>
        <authorList>
            <consortium name="The C. elegans sequencing consortium"/>
        </authorList>
    </citation>
    <scope>NUCLEOTIDE SEQUENCE [LARGE SCALE GENOMIC DNA]</scope>
    <scope>ALTERNATIVE SPLICING</scope>
    <source>
        <strain>Bristol N2</strain>
    </source>
</reference>
<gene>
    <name type="primary">nhr-8</name>
    <name type="ORF">F33D4.1</name>
</gene>
<comment type="function">
    <text>Orphan nuclear receptor.</text>
</comment>
<comment type="subcellular location">
    <subcellularLocation>
        <location evidence="1">Nucleus</location>
    </subcellularLocation>
</comment>
<comment type="alternative products">
    <event type="alternative splicing"/>
    <isoform>
        <id>Q9XYB7-1</id>
        <name>a</name>
        <sequence type="displayed"/>
    </isoform>
    <isoform>
        <id>Q9XYB7-2</id>
        <name>b</name>
        <sequence type="described" ref="VSP_007343"/>
    </isoform>
</comment>
<comment type="similarity">
    <text evidence="4">Belongs to the nuclear hormone receptor family.</text>
</comment>
<name>NHR8_CAEEL</name>
<evidence type="ECO:0000255" key="1">
    <source>
        <dbReference type="PROSITE-ProRule" id="PRU00407"/>
    </source>
</evidence>
<evidence type="ECO:0000255" key="2">
    <source>
        <dbReference type="PROSITE-ProRule" id="PRU01189"/>
    </source>
</evidence>
<evidence type="ECO:0000256" key="3">
    <source>
        <dbReference type="SAM" id="MobiDB-lite"/>
    </source>
</evidence>
<evidence type="ECO:0000305" key="4"/>
<dbReference type="EMBL" id="AF083226">
    <property type="protein sequence ID" value="AAD03684.1"/>
    <property type="molecule type" value="mRNA"/>
</dbReference>
<dbReference type="EMBL" id="FO080445">
    <property type="protein sequence ID" value="CCD63761.1"/>
    <property type="molecule type" value="Genomic_DNA"/>
</dbReference>
<dbReference type="EMBL" id="FO080445">
    <property type="protein sequence ID" value="CCD63762.1"/>
    <property type="molecule type" value="Genomic_DNA"/>
</dbReference>
<dbReference type="PIR" id="T43350">
    <property type="entry name" value="T43350"/>
</dbReference>
<dbReference type="RefSeq" id="NP_001023169.1">
    <molecule id="Q9XYB7-2"/>
    <property type="nucleotide sequence ID" value="NM_001027998.6"/>
</dbReference>
<dbReference type="RefSeq" id="NP_741445.1">
    <molecule id="Q9XYB7-1"/>
    <property type="nucleotide sequence ID" value="NM_171382.5"/>
</dbReference>
<dbReference type="SMR" id="Q9XYB7"/>
<dbReference type="BioGRID" id="42669">
    <property type="interactions" value="30"/>
</dbReference>
<dbReference type="FunCoup" id="Q9XYB7">
    <property type="interactions" value="198"/>
</dbReference>
<dbReference type="IntAct" id="Q9XYB7">
    <property type="interactions" value="24"/>
</dbReference>
<dbReference type="STRING" id="6239.F33D4.1a.1"/>
<dbReference type="PaxDb" id="6239-F33D4.1a"/>
<dbReference type="EnsemblMetazoa" id="F33D4.1a.1">
    <molecule id="Q9XYB7-1"/>
    <property type="protein sequence ID" value="F33D4.1a.1"/>
    <property type="gene ID" value="WBGene00003607"/>
</dbReference>
<dbReference type="EnsemblMetazoa" id="F33D4.1b.1">
    <molecule id="Q9XYB7-2"/>
    <property type="protein sequence ID" value="F33D4.1b.1"/>
    <property type="gene ID" value="WBGene00003607"/>
</dbReference>
<dbReference type="GeneID" id="177551"/>
<dbReference type="KEGG" id="cel:CELE_F33D4.1"/>
<dbReference type="UCSC" id="F33D4.1b">
    <molecule id="Q9XYB7-1"/>
    <property type="organism name" value="c. elegans"/>
</dbReference>
<dbReference type="AGR" id="WB:WBGene00003607"/>
<dbReference type="CTD" id="177551"/>
<dbReference type="WormBase" id="F33D4.1a">
    <molecule id="Q9XYB7-1"/>
    <property type="protein sequence ID" value="CE33927"/>
    <property type="gene ID" value="WBGene00003607"/>
    <property type="gene designation" value="nhr-8"/>
</dbReference>
<dbReference type="WormBase" id="F33D4.1b">
    <molecule id="Q9XYB7-2"/>
    <property type="protein sequence ID" value="CE33928"/>
    <property type="gene ID" value="WBGene00003607"/>
    <property type="gene designation" value="nhr-8"/>
</dbReference>
<dbReference type="eggNOG" id="KOG3575">
    <property type="taxonomic scope" value="Eukaryota"/>
</dbReference>
<dbReference type="GeneTree" id="ENSGT00940000153391"/>
<dbReference type="InParanoid" id="Q9XYB7"/>
<dbReference type="OMA" id="FRELHVD"/>
<dbReference type="OrthoDB" id="6355676at2759"/>
<dbReference type="PhylomeDB" id="Q9XYB7"/>
<dbReference type="Reactome" id="R-CEL-196791">
    <property type="pathway name" value="Vitamin D (calciferol) metabolism"/>
</dbReference>
<dbReference type="Reactome" id="R-CEL-383280">
    <property type="pathway name" value="Nuclear Receptor transcription pathway"/>
</dbReference>
<dbReference type="SignaLink" id="Q9XYB7"/>
<dbReference type="PRO" id="PR:Q9XYB7"/>
<dbReference type="Proteomes" id="UP000001940">
    <property type="component" value="Chromosome IV"/>
</dbReference>
<dbReference type="Bgee" id="WBGene00003607">
    <property type="expression patterns" value="Expressed in larva and 3 other cell types or tissues"/>
</dbReference>
<dbReference type="GO" id="GO:0005634">
    <property type="term" value="C:nucleus"/>
    <property type="evidence" value="ECO:0000314"/>
    <property type="project" value="WormBase"/>
</dbReference>
<dbReference type="GO" id="GO:0004879">
    <property type="term" value="F:nuclear receptor activity"/>
    <property type="evidence" value="ECO:0000250"/>
    <property type="project" value="WormBase"/>
</dbReference>
<dbReference type="GO" id="GO:0000978">
    <property type="term" value="F:RNA polymerase II cis-regulatory region sequence-specific DNA binding"/>
    <property type="evidence" value="ECO:0000318"/>
    <property type="project" value="GO_Central"/>
</dbReference>
<dbReference type="GO" id="GO:0008270">
    <property type="term" value="F:zinc ion binding"/>
    <property type="evidence" value="ECO:0007669"/>
    <property type="project" value="UniProtKB-KW"/>
</dbReference>
<dbReference type="GO" id="GO:0030154">
    <property type="term" value="P:cell differentiation"/>
    <property type="evidence" value="ECO:0000318"/>
    <property type="project" value="GO_Central"/>
</dbReference>
<dbReference type="GO" id="GO:0042632">
    <property type="term" value="P:cholesterol homeostasis"/>
    <property type="evidence" value="ECO:0000315"/>
    <property type="project" value="WormBase"/>
</dbReference>
<dbReference type="GO" id="GO:0030522">
    <property type="term" value="P:intracellular receptor signaling pathway"/>
    <property type="evidence" value="ECO:0000318"/>
    <property type="project" value="GO_Central"/>
</dbReference>
<dbReference type="GO" id="GO:0000122">
    <property type="term" value="P:negative regulation of transcription by RNA polymerase II"/>
    <property type="evidence" value="ECO:0000318"/>
    <property type="project" value="GO_Central"/>
</dbReference>
<dbReference type="GO" id="GO:0045944">
    <property type="term" value="P:positive regulation of transcription by RNA polymerase II"/>
    <property type="evidence" value="ECO:0000318"/>
    <property type="project" value="GO_Central"/>
</dbReference>
<dbReference type="CDD" id="cd06966">
    <property type="entry name" value="NR_DBD_CAR"/>
    <property type="match status" value="1"/>
</dbReference>
<dbReference type="CDD" id="cd06929">
    <property type="entry name" value="NR_LBD_F1"/>
    <property type="match status" value="1"/>
</dbReference>
<dbReference type="FunFam" id="1.10.565.10:FF:000060">
    <property type="entry name" value="Nuclear hormone receptor family member nhr-8"/>
    <property type="match status" value="1"/>
</dbReference>
<dbReference type="Gene3D" id="3.30.50.10">
    <property type="entry name" value="Erythroid Transcription Factor GATA-1, subunit A"/>
    <property type="match status" value="1"/>
</dbReference>
<dbReference type="Gene3D" id="1.10.565.10">
    <property type="entry name" value="Retinoid X Receptor"/>
    <property type="match status" value="1"/>
</dbReference>
<dbReference type="InterPro" id="IPR035500">
    <property type="entry name" value="NHR-like_dom_sf"/>
</dbReference>
<dbReference type="InterPro" id="IPR000536">
    <property type="entry name" value="Nucl_hrmn_rcpt_lig-bd"/>
</dbReference>
<dbReference type="InterPro" id="IPR050234">
    <property type="entry name" value="Nuclear_hormone_rcpt_NR1"/>
</dbReference>
<dbReference type="InterPro" id="IPR001628">
    <property type="entry name" value="Znf_hrmn_rcpt"/>
</dbReference>
<dbReference type="InterPro" id="IPR013088">
    <property type="entry name" value="Znf_NHR/GATA"/>
</dbReference>
<dbReference type="PANTHER" id="PTHR24082">
    <property type="entry name" value="NUCLEAR HORMONE RECEPTOR"/>
    <property type="match status" value="1"/>
</dbReference>
<dbReference type="PANTHER" id="PTHR24082:SF283">
    <property type="entry name" value="NUCLEAR HORMONE RECEPTOR HR96"/>
    <property type="match status" value="1"/>
</dbReference>
<dbReference type="Pfam" id="PF00104">
    <property type="entry name" value="Hormone_recep"/>
    <property type="match status" value="1"/>
</dbReference>
<dbReference type="Pfam" id="PF00105">
    <property type="entry name" value="zf-C4"/>
    <property type="match status" value="1"/>
</dbReference>
<dbReference type="PRINTS" id="PR00047">
    <property type="entry name" value="STROIDFINGER"/>
</dbReference>
<dbReference type="SMART" id="SM00430">
    <property type="entry name" value="HOLI"/>
    <property type="match status" value="1"/>
</dbReference>
<dbReference type="SMART" id="SM00399">
    <property type="entry name" value="ZnF_C4"/>
    <property type="match status" value="1"/>
</dbReference>
<dbReference type="SUPFAM" id="SSF57716">
    <property type="entry name" value="Glucocorticoid receptor-like (DNA-binding domain)"/>
    <property type="match status" value="1"/>
</dbReference>
<dbReference type="SUPFAM" id="SSF48508">
    <property type="entry name" value="Nuclear receptor ligand-binding domain"/>
    <property type="match status" value="1"/>
</dbReference>
<dbReference type="PROSITE" id="PS51843">
    <property type="entry name" value="NR_LBD"/>
    <property type="match status" value="1"/>
</dbReference>
<dbReference type="PROSITE" id="PS00031">
    <property type="entry name" value="NUCLEAR_REC_DBD_1"/>
    <property type="match status" value="1"/>
</dbReference>
<dbReference type="PROSITE" id="PS51030">
    <property type="entry name" value="NUCLEAR_REC_DBD_2"/>
    <property type="match status" value="1"/>
</dbReference>
<keyword id="KW-0025">Alternative splicing</keyword>
<keyword id="KW-0238">DNA-binding</keyword>
<keyword id="KW-0479">Metal-binding</keyword>
<keyword id="KW-0539">Nucleus</keyword>
<keyword id="KW-0675">Receptor</keyword>
<keyword id="KW-1185">Reference proteome</keyword>
<keyword id="KW-0804">Transcription</keyword>
<keyword id="KW-0805">Transcription regulation</keyword>
<keyword id="KW-0862">Zinc</keyword>
<keyword id="KW-0863">Zinc-finger</keyword>
<accession>Q9XYB7</accession>
<accession>O44188</accession>
<accession>Q8MXI8</accession>
<sequence length="560" mass="63317">MPSSSPSMDESRRSAVPPKEPAGRICTVCSDRANGYNFGVLTCESCKAFFRRNASKHKEIKCPFSDSCQITSASRKFCQACRLNKCFAVGMNSEWLNDLKPKSSIVSGKFKRKKPDMKNNLKVEVDDTEEDLENDDEEQISVPKALLEKLINKANEKSKDRCTCKCQCGFYPITQRLTAYEPKDTTAVNSPQDISFSHHLHHSDSFYSSSTSTLSPMSVISCAPSSHDSSGYNTSQLVTQSPTNYTVSPASIPSSITELSPQMPSQYPPMLSPFQFGVMAQMAAPANFLNFPPMPERTWTPIQAVSTVPVTETLPPNLLEQIHSKIDKYIGVLNEDEITLLEELHVQNEPLNAPLIQWHNPKSIDGVFRIIEEALRRIVNMACQLSLFRELHVDDRKNLLKSGFGELLIVRGLMAYDKSDNSWNHSFGVRGKMEVKVEVLKNPKLEEHYKAHMNLLSTFGEDVRNNEHLMLIFNAAVIFHPHVSNLRDSKRVHSTQAKYFQMLLKLLTFEYGKSRADIAYSNLLNQVVELHRVNRTLLRVFYGLDIAQLDPLIRELCSFE</sequence>
<feature type="chain" id="PRO_0000053761" description="Nuclear hormone receptor family member nhr-8">
    <location>
        <begin position="1"/>
        <end position="560"/>
    </location>
</feature>
<feature type="domain" description="NR LBD" evidence="2">
    <location>
        <begin position="336"/>
        <end position="560"/>
    </location>
</feature>
<feature type="DNA-binding region" description="Nuclear receptor" evidence="1">
    <location>
        <begin position="23"/>
        <end position="98"/>
    </location>
</feature>
<feature type="zinc finger region" description="NR C4-type" evidence="1">
    <location>
        <begin position="26"/>
        <end position="46"/>
    </location>
</feature>
<feature type="zinc finger region" description="NR C4-type" evidence="1">
    <location>
        <begin position="62"/>
        <end position="86"/>
    </location>
</feature>
<feature type="region of interest" description="Disordered" evidence="3">
    <location>
        <begin position="1"/>
        <end position="21"/>
    </location>
</feature>
<feature type="splice variant" id="VSP_007343" description="In isoform b." evidence="4">
    <location>
        <position position="188"/>
    </location>
</feature>
<protein>
    <recommendedName>
        <fullName>Nuclear hormone receptor family member nhr-8</fullName>
    </recommendedName>
</protein>